<proteinExistence type="inferred from homology"/>
<reference key="1">
    <citation type="journal article" date="2002" name="Proc. Natl. Acad. Sci. U.S.A.">
        <title>Complete genome sequence of Clostridium perfringens, an anaerobic flesh-eater.</title>
        <authorList>
            <person name="Shimizu T."/>
            <person name="Ohtani K."/>
            <person name="Hirakawa H."/>
            <person name="Ohshima K."/>
            <person name="Yamashita A."/>
            <person name="Shiba T."/>
            <person name="Ogasawara N."/>
            <person name="Hattori M."/>
            <person name="Kuhara S."/>
            <person name="Hayashi H."/>
        </authorList>
    </citation>
    <scope>NUCLEOTIDE SEQUENCE [LARGE SCALE GENOMIC DNA]</scope>
    <source>
        <strain>13 / Type A</strain>
    </source>
</reference>
<comment type="function">
    <text evidence="1">One of the primary rRNA binding proteins, it binds directly to 16S rRNA where it nucleates assembly of the body of the 30S subunit.</text>
</comment>
<comment type="function">
    <text evidence="1">With S5 and S12 plays an important role in translational accuracy.</text>
</comment>
<comment type="subunit">
    <text evidence="1">Part of the 30S ribosomal subunit. Contacts protein S5. The interaction surface between S4 and S5 is involved in control of translational fidelity (By similarity).</text>
</comment>
<comment type="similarity">
    <text evidence="3">Belongs to the universal ribosomal protein uS4 family.</text>
</comment>
<dbReference type="EMBL" id="BA000016">
    <property type="protein sequence ID" value="BAB82083.1"/>
    <property type="molecule type" value="Genomic_DNA"/>
</dbReference>
<dbReference type="SMR" id="Q8XHV0"/>
<dbReference type="STRING" id="195102.gene:10491694"/>
<dbReference type="KEGG" id="cpe:CPE2377"/>
<dbReference type="HOGENOM" id="CLU_092403_0_2_9"/>
<dbReference type="Proteomes" id="UP000000818">
    <property type="component" value="Chromosome"/>
</dbReference>
<dbReference type="GO" id="GO:0015935">
    <property type="term" value="C:small ribosomal subunit"/>
    <property type="evidence" value="ECO:0007669"/>
    <property type="project" value="InterPro"/>
</dbReference>
<dbReference type="GO" id="GO:0019843">
    <property type="term" value="F:rRNA binding"/>
    <property type="evidence" value="ECO:0007669"/>
    <property type="project" value="UniProtKB-UniRule"/>
</dbReference>
<dbReference type="GO" id="GO:0003735">
    <property type="term" value="F:structural constituent of ribosome"/>
    <property type="evidence" value="ECO:0007669"/>
    <property type="project" value="InterPro"/>
</dbReference>
<dbReference type="GO" id="GO:0042274">
    <property type="term" value="P:ribosomal small subunit biogenesis"/>
    <property type="evidence" value="ECO:0007669"/>
    <property type="project" value="TreeGrafter"/>
</dbReference>
<dbReference type="GO" id="GO:0006412">
    <property type="term" value="P:translation"/>
    <property type="evidence" value="ECO:0007669"/>
    <property type="project" value="UniProtKB-UniRule"/>
</dbReference>
<dbReference type="CDD" id="cd00165">
    <property type="entry name" value="S4"/>
    <property type="match status" value="1"/>
</dbReference>
<dbReference type="FunFam" id="1.10.1050.10:FF:000001">
    <property type="entry name" value="30S ribosomal protein S4"/>
    <property type="match status" value="1"/>
</dbReference>
<dbReference type="FunFam" id="3.10.290.10:FF:000001">
    <property type="entry name" value="30S ribosomal protein S4"/>
    <property type="match status" value="1"/>
</dbReference>
<dbReference type="Gene3D" id="1.10.1050.10">
    <property type="entry name" value="Ribosomal Protein S4 Delta 41, Chain A, domain 1"/>
    <property type="match status" value="1"/>
</dbReference>
<dbReference type="Gene3D" id="3.10.290.10">
    <property type="entry name" value="RNA-binding S4 domain"/>
    <property type="match status" value="1"/>
</dbReference>
<dbReference type="HAMAP" id="MF_01306_B">
    <property type="entry name" value="Ribosomal_uS4_B"/>
    <property type="match status" value="1"/>
</dbReference>
<dbReference type="InterPro" id="IPR022801">
    <property type="entry name" value="Ribosomal_uS4"/>
</dbReference>
<dbReference type="InterPro" id="IPR005709">
    <property type="entry name" value="Ribosomal_uS4_bac-type"/>
</dbReference>
<dbReference type="InterPro" id="IPR018079">
    <property type="entry name" value="Ribosomal_uS4_CS"/>
</dbReference>
<dbReference type="InterPro" id="IPR001912">
    <property type="entry name" value="Ribosomal_uS4_N"/>
</dbReference>
<dbReference type="InterPro" id="IPR002942">
    <property type="entry name" value="S4_RNA-bd"/>
</dbReference>
<dbReference type="InterPro" id="IPR036986">
    <property type="entry name" value="S4_RNA-bd_sf"/>
</dbReference>
<dbReference type="NCBIfam" id="NF003717">
    <property type="entry name" value="PRK05327.1"/>
    <property type="match status" value="1"/>
</dbReference>
<dbReference type="NCBIfam" id="TIGR01017">
    <property type="entry name" value="rpsD_bact"/>
    <property type="match status" value="1"/>
</dbReference>
<dbReference type="PANTHER" id="PTHR11831">
    <property type="entry name" value="30S 40S RIBOSOMAL PROTEIN"/>
    <property type="match status" value="1"/>
</dbReference>
<dbReference type="PANTHER" id="PTHR11831:SF4">
    <property type="entry name" value="SMALL RIBOSOMAL SUBUNIT PROTEIN US4M"/>
    <property type="match status" value="1"/>
</dbReference>
<dbReference type="Pfam" id="PF00163">
    <property type="entry name" value="Ribosomal_S4"/>
    <property type="match status" value="1"/>
</dbReference>
<dbReference type="Pfam" id="PF01479">
    <property type="entry name" value="S4"/>
    <property type="match status" value="1"/>
</dbReference>
<dbReference type="SMART" id="SM01390">
    <property type="entry name" value="Ribosomal_S4"/>
    <property type="match status" value="1"/>
</dbReference>
<dbReference type="SMART" id="SM00363">
    <property type="entry name" value="S4"/>
    <property type="match status" value="1"/>
</dbReference>
<dbReference type="SUPFAM" id="SSF55174">
    <property type="entry name" value="Alpha-L RNA-binding motif"/>
    <property type="match status" value="1"/>
</dbReference>
<dbReference type="PROSITE" id="PS00632">
    <property type="entry name" value="RIBOSOMAL_S4"/>
    <property type="match status" value="1"/>
</dbReference>
<dbReference type="PROSITE" id="PS50889">
    <property type="entry name" value="S4"/>
    <property type="match status" value="1"/>
</dbReference>
<evidence type="ECO:0000250" key="1"/>
<evidence type="ECO:0000255" key="2">
    <source>
        <dbReference type="HAMAP-Rule" id="MF_01306"/>
    </source>
</evidence>
<evidence type="ECO:0000305" key="3"/>
<name>RS4A_CLOPE</name>
<feature type="chain" id="PRO_0000132370" description="Small ribosomal subunit protein uS4A">
    <location>
        <begin position="1"/>
        <end position="206"/>
    </location>
</feature>
<feature type="domain" description="S4 RNA-binding">
    <location>
        <begin position="98"/>
        <end position="163"/>
    </location>
</feature>
<gene>
    <name type="primary">rpsD1</name>
    <name type="ordered locus">CPE2377</name>
</gene>
<sequence length="206" mass="23519">MARYTGATCKLCRREGMKLFLKGDRCYTDKCAFVRRSYAPGQHGASRKKLSNYGTQLREKQKAKRIYGVLEGQFRNTYERAEKMRGIAGENLLKLLEMRLDNVVYRLGYGASRTEARQLVNHGHFLVNGKKVDIASFKVSVNDVITVCEKSRGSERFKMFAENPKALPKWLEANVENFEGKVVAEPAREDIDVPVNETLIVELYSK</sequence>
<organism>
    <name type="scientific">Clostridium perfringens (strain 13 / Type A)</name>
    <dbReference type="NCBI Taxonomy" id="195102"/>
    <lineage>
        <taxon>Bacteria</taxon>
        <taxon>Bacillati</taxon>
        <taxon>Bacillota</taxon>
        <taxon>Clostridia</taxon>
        <taxon>Eubacteriales</taxon>
        <taxon>Clostridiaceae</taxon>
        <taxon>Clostridium</taxon>
    </lineage>
</organism>
<protein>
    <recommendedName>
        <fullName evidence="2">Small ribosomal subunit protein uS4A</fullName>
    </recommendedName>
    <alternativeName>
        <fullName evidence="3">30S ribosomal protein S4 1</fullName>
    </alternativeName>
</protein>
<accession>Q8XHV0</accession>
<keyword id="KW-1185">Reference proteome</keyword>
<keyword id="KW-0687">Ribonucleoprotein</keyword>
<keyword id="KW-0689">Ribosomal protein</keyword>
<keyword id="KW-0694">RNA-binding</keyword>
<keyword id="KW-0699">rRNA-binding</keyword>